<gene>
    <name evidence="9" type="primary">FAH12</name>
    <name evidence="8" type="synonym">FAH</name>
</gene>
<feature type="chain" id="PRO_0000443444" description="Oleate hydroxylase FAH12">
    <location>
        <begin position="1"/>
        <end position="477"/>
    </location>
</feature>
<feature type="transmembrane region" description="Helical" evidence="3">
    <location>
        <begin position="101"/>
        <end position="118"/>
    </location>
</feature>
<feature type="transmembrane region" description="Helical" evidence="3">
    <location>
        <begin position="133"/>
        <end position="153"/>
    </location>
</feature>
<feature type="transmembrane region" description="Helical" evidence="3">
    <location>
        <begin position="167"/>
        <end position="187"/>
    </location>
</feature>
<feature type="transmembrane region" description="Helical" evidence="3">
    <location>
        <begin position="234"/>
        <end position="254"/>
    </location>
</feature>
<feature type="transmembrane region" description="Helical" evidence="3">
    <location>
        <begin position="299"/>
        <end position="319"/>
    </location>
</feature>
<feature type="transmembrane region" description="Helical" evidence="3">
    <location>
        <begin position="327"/>
        <end position="347"/>
    </location>
</feature>
<feature type="region of interest" description="Disordered" evidence="4">
    <location>
        <begin position="26"/>
        <end position="48"/>
    </location>
</feature>
<feature type="short sequence motif" description="Histidine box-1" evidence="1">
    <location>
        <begin position="155"/>
        <end position="159"/>
    </location>
</feature>
<feature type="short sequence motif" description="Histidine box-2" evidence="1">
    <location>
        <begin position="191"/>
        <end position="195"/>
    </location>
</feature>
<feature type="compositionally biased region" description="Low complexity" evidence="4">
    <location>
        <begin position="27"/>
        <end position="48"/>
    </location>
</feature>
<feature type="sequence conflict" description="In Ref. 2; BAW27658." ref="2">
    <original>A</original>
    <variation>T</variation>
    <location>
        <position position="327"/>
    </location>
</feature>
<dbReference type="EC" id="1.14.-.-" evidence="5 6 7"/>
<dbReference type="EMBL" id="EU661785">
    <property type="protein sequence ID" value="ACF37070.1"/>
    <property type="molecule type" value="mRNA"/>
</dbReference>
<dbReference type="EMBL" id="LC149858">
    <property type="protein sequence ID" value="BAW27658.1"/>
    <property type="molecule type" value="mRNA"/>
</dbReference>
<dbReference type="SwissLipids" id="SLP:000001882"/>
<dbReference type="VEuPathDB" id="FungiDB:CPUR_04032"/>
<dbReference type="BRENDA" id="1.14.18.4">
    <property type="organism ID" value="1445"/>
</dbReference>
<dbReference type="UniPathway" id="UPA01038"/>
<dbReference type="GO" id="GO:0005783">
    <property type="term" value="C:endoplasmic reticulum"/>
    <property type="evidence" value="ECO:0007669"/>
    <property type="project" value="UniProtKB-KW"/>
</dbReference>
<dbReference type="GO" id="GO:0016020">
    <property type="term" value="C:membrane"/>
    <property type="evidence" value="ECO:0007669"/>
    <property type="project" value="UniProtKB-KW"/>
</dbReference>
<dbReference type="GO" id="GO:0102517">
    <property type="term" value="F:oleate 12-hydroxylase activity"/>
    <property type="evidence" value="ECO:0000314"/>
    <property type="project" value="UniProtKB"/>
</dbReference>
<dbReference type="GO" id="GO:0042389">
    <property type="term" value="F:omega-3 fatty acid desaturase activity"/>
    <property type="evidence" value="ECO:0000314"/>
    <property type="project" value="UniProtKB"/>
</dbReference>
<dbReference type="GO" id="GO:0016717">
    <property type="term" value="F:oxidoreductase activity, acting on paired donors, with oxidation of a pair of donors resulting in the reduction of molecular oxygen to two molecules of water"/>
    <property type="evidence" value="ECO:0007669"/>
    <property type="project" value="InterPro"/>
</dbReference>
<dbReference type="GO" id="GO:0050183">
    <property type="term" value="F:phosphatidylcholine 12-monooxygenase activity"/>
    <property type="evidence" value="ECO:0000314"/>
    <property type="project" value="UniProtKB"/>
</dbReference>
<dbReference type="GO" id="GO:0006633">
    <property type="term" value="P:fatty acid biosynthetic process"/>
    <property type="evidence" value="ECO:0007669"/>
    <property type="project" value="UniProtKB-KW"/>
</dbReference>
<dbReference type="GO" id="GO:0006631">
    <property type="term" value="P:fatty acid metabolic process"/>
    <property type="evidence" value="ECO:0000314"/>
    <property type="project" value="UniProtKB"/>
</dbReference>
<dbReference type="CDD" id="cd03507">
    <property type="entry name" value="Delta12-FADS-like"/>
    <property type="match status" value="1"/>
</dbReference>
<dbReference type="InterPro" id="IPR005804">
    <property type="entry name" value="FA_desaturase_dom"/>
</dbReference>
<dbReference type="InterPro" id="IPR021863">
    <property type="entry name" value="FAS_N"/>
</dbReference>
<dbReference type="InterPro" id="IPR012171">
    <property type="entry name" value="Fatty_acid_desaturase"/>
</dbReference>
<dbReference type="PANTHER" id="PTHR32100">
    <property type="entry name" value="OMEGA-6 FATTY ACID DESATURASE, CHLOROPLASTIC"/>
    <property type="match status" value="1"/>
</dbReference>
<dbReference type="Pfam" id="PF11960">
    <property type="entry name" value="DUF3474"/>
    <property type="match status" value="1"/>
</dbReference>
<dbReference type="Pfam" id="PF00487">
    <property type="entry name" value="FA_desaturase"/>
    <property type="match status" value="2"/>
</dbReference>
<accession>B4YQU1</accession>
<accession>A0A1L7NQ89</accession>
<organism>
    <name type="scientific">Claviceps purpurea</name>
    <name type="common">Ergot fungus</name>
    <name type="synonym">Sphacelia segetum</name>
    <dbReference type="NCBI Taxonomy" id="5111"/>
    <lineage>
        <taxon>Eukaryota</taxon>
        <taxon>Fungi</taxon>
        <taxon>Dikarya</taxon>
        <taxon>Ascomycota</taxon>
        <taxon>Pezizomycotina</taxon>
        <taxon>Sordariomycetes</taxon>
        <taxon>Hypocreomycetidae</taxon>
        <taxon>Hypocreales</taxon>
        <taxon>Clavicipitaceae</taxon>
        <taxon>Claviceps</taxon>
    </lineage>
</organism>
<proteinExistence type="evidence at protein level"/>
<protein>
    <recommendedName>
        <fullName evidence="8">Oleate hydroxylase FAH12</fullName>
        <shortName evidence="8">CpFAH</shortName>
        <shortName evidence="9">CpFAH12</shortName>
        <ecNumber evidence="5 6 7">1.14.-.-</ecNumber>
    </recommendedName>
    <alternativeName>
        <fullName evidence="8">Oleate Delta(12)-hydroxylase</fullName>
    </alternativeName>
</protein>
<name>FAH12_CLAPU</name>
<comment type="function">
    <text evidence="5 6 7">Oleate hydroxylase involved in the biosynthesis of ricinoleate (12-hydroxy-cis-9-octadecenoate), that is present at high levels in C.purpurea sclerotium tissue (PubMed:22370951, PubMed:27830762). Exhibits delta(12) hydroxylase activity on 16C and 18C monounsaturated fatty acids (i.e. oleic and palmitoleic acids), and, to a lower extent, gamma(3) hydroxylase activity on ricinoleate (PubMed:18467452, PubMed:27830762).</text>
</comment>
<comment type="catalytic activity">
    <reaction evidence="5 6 7">
        <text>(9Z)-octadecenoate + AH2 + O2 = (12R)-hydroxy-(9Z)-octadecenoate + A + H2O</text>
        <dbReference type="Rhea" id="RHEA:55956"/>
        <dbReference type="ChEBI" id="CHEBI:13193"/>
        <dbReference type="ChEBI" id="CHEBI:15377"/>
        <dbReference type="ChEBI" id="CHEBI:15379"/>
        <dbReference type="ChEBI" id="CHEBI:17499"/>
        <dbReference type="ChEBI" id="CHEBI:30823"/>
        <dbReference type="ChEBI" id="CHEBI:91295"/>
    </reaction>
</comment>
<comment type="pathway">
    <text evidence="5 6 7">Lipid metabolism; monounsaturated fatty acid biosynthesis.</text>
</comment>
<comment type="subcellular location">
    <subcellularLocation>
        <location evidence="2">Microsome membrane</location>
        <topology evidence="3">Multi-pass membrane protein</topology>
    </subcellularLocation>
</comment>
<comment type="domain">
    <text evidence="1">The histidine box domains may contain the active site and/or be involved in metal ion binding.</text>
</comment>
<comment type="biotechnology">
    <text evidence="5 6 7">Mediates gamma(3) desaturated fatty acids (e.g. densipolic acid) and ricinoleic acid accumulation when expressed in S.pombe with a temperature-dependent toxicity, at 30 degrees Celsius but not at 37 degrees Celsius.</text>
</comment>
<comment type="biotechnology">
    <text evidence="5">Triggers hydroxy fatty acids accumulation in seeds when expressed in A.thaliana under the guidance of a seed-specific promoter.</text>
</comment>
<comment type="biotechnology">
    <text evidence="7">Promotes ricinoleic acid biosynthesis when expressed in C.gracilis.</text>
</comment>
<comment type="similarity">
    <text evidence="10">Belongs to the fatty acid desaturase type 1 family.</text>
</comment>
<evidence type="ECO:0000250" key="1">
    <source>
        <dbReference type="UniProtKB" id="D2CPE1"/>
    </source>
</evidence>
<evidence type="ECO:0000250" key="2">
    <source>
        <dbReference type="UniProtKB" id="Q41131"/>
    </source>
</evidence>
<evidence type="ECO:0000255" key="3"/>
<evidence type="ECO:0000256" key="4">
    <source>
        <dbReference type="SAM" id="MobiDB-lite"/>
    </source>
</evidence>
<evidence type="ECO:0000269" key="5">
    <source>
    </source>
</evidence>
<evidence type="ECO:0000269" key="6">
    <source>
    </source>
</evidence>
<evidence type="ECO:0000269" key="7">
    <source>
    </source>
</evidence>
<evidence type="ECO:0000303" key="8">
    <source>
    </source>
</evidence>
<evidence type="ECO:0000303" key="9">
    <source>
    </source>
</evidence>
<evidence type="ECO:0000305" key="10"/>
<keyword id="KW-0256">Endoplasmic reticulum</keyword>
<keyword id="KW-0275">Fatty acid biosynthesis</keyword>
<keyword id="KW-0276">Fatty acid metabolism</keyword>
<keyword id="KW-0444">Lipid biosynthesis</keyword>
<keyword id="KW-0443">Lipid metabolism</keyword>
<keyword id="KW-0472">Membrane</keyword>
<keyword id="KW-0492">Microsome</keyword>
<keyword id="KW-0503">Monooxygenase</keyword>
<keyword id="KW-0560">Oxidoreductase</keyword>
<keyword id="KW-0812">Transmembrane</keyword>
<keyword id="KW-1133">Transmembrane helix</keyword>
<reference key="1">
    <citation type="journal article" date="2008" name="Plant Physiol.">
        <title>An oleate hydroxylase from the fungus Claviceps purpurea: cloning, functional analysis, and expression in Arabidopsis.</title>
        <authorList>
            <person name="Meesapyodsuk D."/>
            <person name="Qiu X."/>
        </authorList>
    </citation>
    <scope>NUCLEOTIDE SEQUENCE [MRNA]</scope>
    <scope>FUNCTION</scope>
    <scope>CATALYTIC ACTIVITY</scope>
    <scope>PATHWAY</scope>
    <scope>BIOTECHNOLOGY</scope>
</reference>
<reference key="2">
    <citation type="journal article" date="2016" name="Sci. Rep.">
        <title>Production of ricinoleic acid-containing monoestolide triacylglycerides in an oleaginous diatom, Chaetoceros gracilis.</title>
        <authorList>
            <person name="Kajikawa M."/>
            <person name="Abe T."/>
            <person name="Ifuku K."/>
            <person name="Furutani K."/>
            <person name="Yan D."/>
            <person name="Okuda T."/>
            <person name="Ando A."/>
            <person name="Kishino S."/>
            <person name="Ogawa J."/>
            <person name="Fukuzawa H."/>
        </authorList>
    </citation>
    <scope>NUCLEOTIDE SEQUENCE [MRNA]</scope>
    <scope>FUNCTION</scope>
    <scope>CATALYTIC ACTIVITY</scope>
    <scope>BIOTECHNOLOGY</scope>
    <scope>PATHWAY</scope>
    <source>
        <strain>NBRC 6263</strain>
    </source>
</reference>
<reference key="3">
    <citation type="journal article" date="2012" name="Appl. Microbiol. Biotechnol.">
        <title>Engineered high content of ricinoleic acid in fission yeast Schizosaccharomyces pombe.</title>
        <authorList>
            <person name="Holic R."/>
            <person name="Yazawa H."/>
            <person name="Kumagai H."/>
            <person name="Uemura H."/>
        </authorList>
    </citation>
    <scope>FUNCTION</scope>
    <scope>CATALYTIC ACTIVITY</scope>
    <scope>BIOTECHNOLOGY</scope>
    <scope>PATHWAY</scope>
</reference>
<sequence length="477" mass="53452">MASATPAMSENAVLRHKAASTTGIDYESSAAVSPAESPRTSASSTSLSSLSSLDANEKKDEYAGLLDTYGNAFTPPDFSIKDIRAAIPKHCYERSTIKSYAYVLRDLLCLSTTFYLFHNFVTPENIPSNPLRFVLWSIYTVLQGLFATGLWVIGHECGHCAFSPSPFISDLTGWVIHSALLVPYFSWKFSHSAHHKGIGNMERDMVFLPRTREQQATRLGRAVEELGDLCEETPIYTALHLVGKQLIGWPSYLMTNATGHNFHERQREGRGKGKKNGFGGGVNHFDPRSPIFEARQAKYIVLSDIGLGLAIAALVYLGNRFGWANMAVWYFLPYLWVNHWLVAITFLQHTDPTLPHYNREEWNFVRGGACTIDRDLGFIGRHLFHGIADTHVVHHYVSRIPFYNADEASEAIKPIMGKHYRSDTAHGPVGFLHALWKTARWCQWVEPSADAQGAGKGILFYRNRNKLGTKPISMKTQ</sequence>